<reference key="1">
    <citation type="journal article" date="2014" name="Virus Res.">
        <title>Characterization of a novel Pseudomonas aeruginosa bacteriophage, KPP25, of the family Podoviridae.</title>
        <authorList>
            <person name="Miyata R."/>
            <person name="Yamaguchi K."/>
            <person name="Uchiyama J."/>
            <person name="Shigehisa R."/>
            <person name="Takemura-Uchiyama I."/>
            <person name="Kato S."/>
            <person name="Ujihara T."/>
            <person name="Sakaguchi Y."/>
            <person name="Daibata M."/>
            <person name="Matsuzaki S."/>
        </authorList>
    </citation>
    <scope>NUCLEOTIDE SEQUENCE [GENOMIC DNA]</scope>
    <scope>PROTEIN SEQUENCE OF 2-25</scope>
    <scope>IDENTIFICATION BY MASS SPECTROMETRY</scope>
    <scope>SUBCELLULAR LOCATION</scope>
</reference>
<proteinExistence type="evidence at protein level"/>
<organismHost>
    <name type="scientific">Pseudomonas aeruginosa</name>
    <dbReference type="NCBI Taxonomy" id="287"/>
</organismHost>
<evidence type="ECO:0000269" key="1">
    <source>
    </source>
</evidence>
<evidence type="ECO:0000303" key="2">
    <source>
    </source>
</evidence>
<evidence type="ECO:0000305" key="3"/>
<evidence type="ECO:0000305" key="4">
    <source>
    </source>
</evidence>
<evidence type="ECO:0000312" key="5">
    <source>
        <dbReference type="EMBL" id="BAO58490.1"/>
    </source>
</evidence>
<sequence length="376" mass="41489">MPLPVQGNYTNFARLTNEQKTVWSLQFWRQARNAAFINMFLGTDANSMIQQITELRRDEKGARAVITLIADMVGDGVVGDNQLEGNEEALTAFDTVIQLDQMRAANVHEGRMADQRSIVNFRTTSRDMLAYWLADRMDQLAFLSLAGVSYAYRTNGALRGSSPFPNLTFAADVTPPSANRRLRWDGTNKVLVPNAATSDVTAADTPSYALLVNLKAYAKTKYIRGLRGDGGEEMYHVFLDPLAMAKLKLDPDYIANLRSGYTRGNVNPLFKGGIVTVDGLVIHEFRHVYNTRGMAPGAKWGASGNVDGCSMLFCGAQALGFADIGNPRWVEKEFDYDNKHGISVAKILGFLKPQFPSIYEDGNTEDFGVINVYVAA</sequence>
<accession>C0HJH8</accession>
<accession>X5HZQ4</accession>
<feature type="initiator methionine" description="Removed" evidence="1">
    <location>
        <position position="1"/>
    </location>
</feature>
<feature type="chain" id="PRO_0000429133" description="Major capsid protein" evidence="3">
    <location>
        <begin position="2"/>
        <end position="376"/>
    </location>
</feature>
<keyword id="KW-0167">Capsid protein</keyword>
<keyword id="KW-0903">Direct protein sequencing</keyword>
<keyword id="KW-1185">Reference proteome</keyword>
<keyword id="KW-0946">Virion</keyword>
<comment type="function">
    <text evidence="4">Assembles to form an icosahedral capsid.</text>
</comment>
<comment type="subcellular location">
    <subcellularLocation>
        <location evidence="1">Virion</location>
    </subcellularLocation>
</comment>
<organism>
    <name type="scientific">Pseudomonas phage KPP25</name>
    <name type="common">Bacteriophage KPP25</name>
    <dbReference type="NCBI Taxonomy" id="1462608"/>
    <lineage>
        <taxon>Viruses</taxon>
        <taxon>Duplodnaviria</taxon>
        <taxon>Heunggongvirae</taxon>
        <taxon>Uroviricota</taxon>
        <taxon>Caudoviricetes</taxon>
        <taxon>Kochitakasuvirus</taxon>
        <taxon>Kochitakasuvirus KPP25</taxon>
    </lineage>
</organism>
<protein>
    <recommendedName>
        <fullName evidence="3">Major capsid protein</fullName>
    </recommendedName>
    <alternativeName>
        <fullName evidence="5">Major structural protein</fullName>
    </alternativeName>
    <alternativeName>
        <fullName evidence="2">Major virion protein</fullName>
    </alternativeName>
</protein>
<dbReference type="EMBL" id="AB910393">
    <property type="protein sequence ID" value="BAO58490.1"/>
    <property type="molecule type" value="Genomic_DNA"/>
</dbReference>
<dbReference type="RefSeq" id="YP_009030550.1">
    <property type="nucleotide sequence ID" value="NC_024123.1"/>
</dbReference>
<dbReference type="SMR" id="C0HJH8"/>
<dbReference type="KEGG" id="vg:19484811"/>
<dbReference type="Proteomes" id="UP000204527">
    <property type="component" value="Genome"/>
</dbReference>
<dbReference type="GO" id="GO:0019028">
    <property type="term" value="C:viral capsid"/>
    <property type="evidence" value="ECO:0007669"/>
    <property type="project" value="UniProtKB-KW"/>
</dbReference>
<dbReference type="InterPro" id="IPR025267">
    <property type="entry name" value="ORF017-like"/>
</dbReference>
<dbReference type="NCBIfam" id="TIGR04387">
    <property type="entry name" value="capsid_maj_N4"/>
    <property type="match status" value="1"/>
</dbReference>
<dbReference type="Pfam" id="PF13252">
    <property type="entry name" value="Phage_capsid_3"/>
    <property type="match status" value="1"/>
</dbReference>
<gene>
    <name evidence="2" type="ORF">ORF017</name>
</gene>
<name>CAPSD_BPKP2</name>